<feature type="chain" id="PRO_0000047321" description="Zinc finger protein 260">
    <location>
        <begin position="1"/>
        <end position="407"/>
    </location>
</feature>
<feature type="zinc finger region" description="C2H2-type 1" evidence="2">
    <location>
        <begin position="23"/>
        <end position="45"/>
    </location>
</feature>
<feature type="zinc finger region" description="C2H2-type 2; degenerate" evidence="2">
    <location>
        <begin position="51"/>
        <end position="73"/>
    </location>
</feature>
<feature type="zinc finger region" description="C2H2-type 3" evidence="2">
    <location>
        <begin position="79"/>
        <end position="101"/>
    </location>
</feature>
<feature type="zinc finger region" description="C2H2-type 4" evidence="2">
    <location>
        <begin position="131"/>
        <end position="153"/>
    </location>
</feature>
<feature type="zinc finger region" description="C2H2-type 5" evidence="2">
    <location>
        <begin position="159"/>
        <end position="181"/>
    </location>
</feature>
<feature type="zinc finger region" description="C2H2-type 6" evidence="2">
    <location>
        <begin position="187"/>
        <end position="209"/>
    </location>
</feature>
<feature type="zinc finger region" description="C2H2-type 7" evidence="2">
    <location>
        <begin position="215"/>
        <end position="237"/>
    </location>
</feature>
<feature type="zinc finger region" description="C2H2-type 8" evidence="2">
    <location>
        <begin position="243"/>
        <end position="265"/>
    </location>
</feature>
<feature type="zinc finger region" description="C2H2-type 9" evidence="2">
    <location>
        <begin position="271"/>
        <end position="293"/>
    </location>
</feature>
<feature type="zinc finger region" description="C2H2-type 10" evidence="2">
    <location>
        <begin position="299"/>
        <end position="321"/>
    </location>
</feature>
<feature type="zinc finger region" description="C2H2-type 11" evidence="2">
    <location>
        <begin position="327"/>
        <end position="349"/>
    </location>
</feature>
<feature type="zinc finger region" description="C2H2-type 12" evidence="2">
    <location>
        <begin position="355"/>
        <end position="377"/>
    </location>
</feature>
<feature type="zinc finger region" description="C2H2-type 13" evidence="2">
    <location>
        <begin position="383"/>
        <end position="405"/>
    </location>
</feature>
<feature type="region of interest" description="Disordered" evidence="3">
    <location>
        <begin position="1"/>
        <end position="21"/>
    </location>
</feature>
<feature type="region of interest" description="Disordered" evidence="3">
    <location>
        <begin position="39"/>
        <end position="72"/>
    </location>
</feature>
<feature type="region of interest" description="Disordered" evidence="3">
    <location>
        <begin position="96"/>
        <end position="124"/>
    </location>
</feature>
<feature type="compositionally biased region" description="Basic and acidic residues" evidence="3">
    <location>
        <begin position="39"/>
        <end position="51"/>
    </location>
</feature>
<feature type="compositionally biased region" description="Basic and acidic residues" evidence="3">
    <location>
        <begin position="100"/>
        <end position="111"/>
    </location>
</feature>
<feature type="compositionally biased region" description="Polar residues" evidence="3">
    <location>
        <begin position="115"/>
        <end position="124"/>
    </location>
</feature>
<feature type="sequence conflict" description="In Ref. 3; BAE33630." evidence="6" ref="3">
    <original>L</original>
    <variation>H</variation>
    <location>
        <position position="11"/>
    </location>
</feature>
<feature type="sequence conflict" description="In Ref. 1 and 3." evidence="6" ref="1 3">
    <original>R</original>
    <variation>K</variation>
    <location>
        <position position="121"/>
    </location>
</feature>
<feature type="sequence conflict" description="In Ref. 3; BAC40191." evidence="6" ref="3">
    <original>G</original>
    <variation>R</variation>
    <location>
        <position position="249"/>
    </location>
</feature>
<comment type="function">
    <text>Transcription factor that acts as a cardiac regulator and an effector of alpha1-adrenergic signaling. Binds to PE response elements (PERE) present in the promoter of genes such as ANF/NPPA and acts as a direct transcriptional activator of NPPA. Also acts as a cofactor with GATA4, a key cardiac regulator.</text>
</comment>
<comment type="subunit">
    <text evidence="1">Binds DNA. Interacts with GATA4 (By similarity).</text>
</comment>
<comment type="subcellular location">
    <subcellularLocation>
        <location evidence="1">Nucleus</location>
    </subcellularLocation>
</comment>
<comment type="tissue specificity">
    <text evidence="4 5">Predominantly present in heart. Outside the heart, it is detected in embryonic and postnatal vascular smooth muscle cells and in epithelial cells of the lung, gut and kidney at sites of epithelial morphogenesis and in the spinal cord (at protein level).</text>
</comment>
<comment type="developmental stage">
    <text evidence="5">At 9.5 dpc, it is predominantly detected in cardiomyocyte nuclei This expression is maintained throughout embryonic development in the atria and in the ventricular walls and trabeculae. Also present in the outflow tract, the truncus arteriosus, the developing atrioventricular valve and the cushion mesenchyme. Appears to decrease after 14 dpc and by 17.5 dpc; it is then spatially redistributed, with highest levels in subendocardial myocytes and the septum and no expression in epicardial and apical myocytes. It is also strongly expressed in the atrioventricular valve. During postnatal development, it decreases in both atria and ventricles. In the adult heart, expression is found in the aortic valve in scattered cells and in the atria, ventricles, and septum. Interestingly, it is markedly up-regulated in hypertrophied adult ventricles of transgenic mice overexpressing the angiotensin II receptor (at protein level).</text>
</comment>
<comment type="similarity">
    <text evidence="6">Belongs to the krueppel C2H2-type zinc-finger protein family.</text>
</comment>
<accession>Q62513</accession>
<accession>Q3U170</accession>
<accession>Q8C2Q6</accession>
<accession>Q9R2B4</accession>
<keyword id="KW-0010">Activator</keyword>
<keyword id="KW-0217">Developmental protein</keyword>
<keyword id="KW-0238">DNA-binding</keyword>
<keyword id="KW-0479">Metal-binding</keyword>
<keyword id="KW-0539">Nucleus</keyword>
<keyword id="KW-1185">Reference proteome</keyword>
<keyword id="KW-0677">Repeat</keyword>
<keyword id="KW-0804">Transcription</keyword>
<keyword id="KW-0805">Transcription regulation</keyword>
<keyword id="KW-0862">Zinc</keyword>
<keyword id="KW-0863">Zinc-finger</keyword>
<dbReference type="EMBL" id="AJ224805">
    <property type="protein sequence ID" value="CAB38535.1"/>
    <property type="molecule type" value="Genomic_DNA"/>
</dbReference>
<dbReference type="EMBL" id="D45210">
    <property type="protein sequence ID" value="BAA08144.1"/>
    <property type="molecule type" value="mRNA"/>
</dbReference>
<dbReference type="EMBL" id="AK088177">
    <property type="protein sequence ID" value="BAC40191.1"/>
    <property type="molecule type" value="mRNA"/>
</dbReference>
<dbReference type="EMBL" id="AK156219">
    <property type="protein sequence ID" value="BAE33630.1"/>
    <property type="molecule type" value="mRNA"/>
</dbReference>
<dbReference type="EMBL" id="BC082570">
    <property type="protein sequence ID" value="AAH82570.1"/>
    <property type="molecule type" value="mRNA"/>
</dbReference>
<dbReference type="EMBL" id="BC085180">
    <property type="protein sequence ID" value="AAH85180.1"/>
    <property type="molecule type" value="mRNA"/>
</dbReference>
<dbReference type="CCDS" id="CCDS21078.1"/>
<dbReference type="RefSeq" id="NP_036111.2">
    <property type="nucleotide sequence ID" value="NM_011981.4"/>
</dbReference>
<dbReference type="RefSeq" id="XP_011248885.1">
    <property type="nucleotide sequence ID" value="XM_011250583.1"/>
</dbReference>
<dbReference type="RefSeq" id="XP_011248886.1">
    <property type="nucleotide sequence ID" value="XM_011250584.2"/>
</dbReference>
<dbReference type="SMR" id="Q62513"/>
<dbReference type="FunCoup" id="Q62513">
    <property type="interactions" value="596"/>
</dbReference>
<dbReference type="STRING" id="10090.ENSMUSP00000052200"/>
<dbReference type="iPTMnet" id="Q62513"/>
<dbReference type="PhosphoSitePlus" id="Q62513"/>
<dbReference type="PaxDb" id="10090-ENSMUSP00000052200"/>
<dbReference type="PeptideAtlas" id="Q62513"/>
<dbReference type="ProteomicsDB" id="275005"/>
<dbReference type="Pumba" id="Q62513"/>
<dbReference type="Antibodypedia" id="48040">
    <property type="antibodies" value="40 antibodies from 11 providers"/>
</dbReference>
<dbReference type="DNASU" id="26466"/>
<dbReference type="Ensembl" id="ENSMUST00000050735.12">
    <property type="protein sequence ID" value="ENSMUSP00000052200.6"/>
    <property type="gene ID" value="ENSMUSG00000049421.14"/>
</dbReference>
<dbReference type="Ensembl" id="ENSMUST00000108200.2">
    <property type="protein sequence ID" value="ENSMUSP00000103835.2"/>
    <property type="gene ID" value="ENSMUSG00000049421.14"/>
</dbReference>
<dbReference type="GeneID" id="26466"/>
<dbReference type="KEGG" id="mmu:26466"/>
<dbReference type="UCSC" id="uc009gde.1">
    <property type="organism name" value="mouse"/>
</dbReference>
<dbReference type="AGR" id="MGI:1347071"/>
<dbReference type="CTD" id="26466"/>
<dbReference type="MGI" id="MGI:1347071">
    <property type="gene designation" value="Zfp260"/>
</dbReference>
<dbReference type="VEuPathDB" id="HostDB:ENSMUSG00000049421"/>
<dbReference type="eggNOG" id="KOG1721">
    <property type="taxonomic scope" value="Eukaryota"/>
</dbReference>
<dbReference type="GeneTree" id="ENSGT00940000162468"/>
<dbReference type="HOGENOM" id="CLU_002678_44_0_1"/>
<dbReference type="InParanoid" id="Q62513"/>
<dbReference type="OMA" id="FSQKSHY"/>
<dbReference type="OrthoDB" id="654211at2759"/>
<dbReference type="PhylomeDB" id="Q62513"/>
<dbReference type="TreeFam" id="TF341817"/>
<dbReference type="BioGRID-ORCS" id="26466">
    <property type="hits" value="0 hits in 78 CRISPR screens"/>
</dbReference>
<dbReference type="ChiTaRS" id="Zfp260">
    <property type="organism name" value="mouse"/>
</dbReference>
<dbReference type="PRO" id="PR:Q62513"/>
<dbReference type="Proteomes" id="UP000000589">
    <property type="component" value="Chromosome 7"/>
</dbReference>
<dbReference type="RNAct" id="Q62513">
    <property type="molecule type" value="protein"/>
</dbReference>
<dbReference type="Bgee" id="ENSMUSG00000049421">
    <property type="expression patterns" value="Expressed in gonadal ridge and 260 other cell types or tissues"/>
</dbReference>
<dbReference type="ExpressionAtlas" id="Q62513">
    <property type="expression patterns" value="baseline and differential"/>
</dbReference>
<dbReference type="GO" id="GO:0005829">
    <property type="term" value="C:cytosol"/>
    <property type="evidence" value="ECO:0007669"/>
    <property type="project" value="Ensembl"/>
</dbReference>
<dbReference type="GO" id="GO:0005654">
    <property type="term" value="C:nucleoplasm"/>
    <property type="evidence" value="ECO:0007669"/>
    <property type="project" value="Ensembl"/>
</dbReference>
<dbReference type="GO" id="GO:0003677">
    <property type="term" value="F:DNA binding"/>
    <property type="evidence" value="ECO:0007669"/>
    <property type="project" value="UniProtKB-KW"/>
</dbReference>
<dbReference type="GO" id="GO:0008270">
    <property type="term" value="F:zinc ion binding"/>
    <property type="evidence" value="ECO:0007669"/>
    <property type="project" value="UniProtKB-KW"/>
</dbReference>
<dbReference type="FunFam" id="3.30.160.60:FF:002984">
    <property type="match status" value="1"/>
</dbReference>
<dbReference type="FunFam" id="3.30.160.60:FF:000794">
    <property type="entry name" value="zinc finger protein 2 isoform X2"/>
    <property type="match status" value="1"/>
</dbReference>
<dbReference type="FunFam" id="3.30.160.60:FF:000919">
    <property type="entry name" value="Zinc finger protein 260"/>
    <property type="match status" value="2"/>
</dbReference>
<dbReference type="FunFam" id="3.30.160.60:FF:001408">
    <property type="entry name" value="Zinc finger protein 260"/>
    <property type="match status" value="1"/>
</dbReference>
<dbReference type="FunFam" id="3.30.160.60:FF:000348">
    <property type="entry name" value="zinc finger protein 260"/>
    <property type="match status" value="1"/>
</dbReference>
<dbReference type="FunFam" id="3.30.160.60:FF:000224">
    <property type="entry name" value="Zinc finger protein 329"/>
    <property type="match status" value="1"/>
</dbReference>
<dbReference type="FunFam" id="3.30.160.60:FF:000016">
    <property type="entry name" value="zinc finger protein 37 homolog"/>
    <property type="match status" value="1"/>
</dbReference>
<dbReference type="FunFam" id="3.30.160.60:FF:002090">
    <property type="entry name" value="Zinc finger protein 473"/>
    <property type="match status" value="1"/>
</dbReference>
<dbReference type="FunFam" id="3.30.160.60:FF:003108">
    <property type="entry name" value="Zinc finger protein 646"/>
    <property type="match status" value="1"/>
</dbReference>
<dbReference type="FunFam" id="3.30.160.60:FF:001060">
    <property type="entry name" value="Zinc finger protein OZF"/>
    <property type="match status" value="1"/>
</dbReference>
<dbReference type="Gene3D" id="3.30.160.60">
    <property type="entry name" value="Classic Zinc Finger"/>
    <property type="match status" value="12"/>
</dbReference>
<dbReference type="InterPro" id="IPR050826">
    <property type="entry name" value="Krueppel_C2H2_ZnFinger"/>
</dbReference>
<dbReference type="InterPro" id="IPR036236">
    <property type="entry name" value="Znf_C2H2_sf"/>
</dbReference>
<dbReference type="InterPro" id="IPR013087">
    <property type="entry name" value="Znf_C2H2_type"/>
</dbReference>
<dbReference type="PANTHER" id="PTHR24377">
    <property type="entry name" value="IP01015P-RELATED"/>
    <property type="match status" value="1"/>
</dbReference>
<dbReference type="Pfam" id="PF00096">
    <property type="entry name" value="zf-C2H2"/>
    <property type="match status" value="9"/>
</dbReference>
<dbReference type="Pfam" id="PF13912">
    <property type="entry name" value="zf-C2H2_6"/>
    <property type="match status" value="1"/>
</dbReference>
<dbReference type="Pfam" id="PF13465">
    <property type="entry name" value="zf-H2C2_2"/>
    <property type="match status" value="1"/>
</dbReference>
<dbReference type="SMART" id="SM00355">
    <property type="entry name" value="ZnF_C2H2"/>
    <property type="match status" value="13"/>
</dbReference>
<dbReference type="SUPFAM" id="SSF57667">
    <property type="entry name" value="beta-beta-alpha zinc fingers"/>
    <property type="match status" value="7"/>
</dbReference>
<dbReference type="PROSITE" id="PS00028">
    <property type="entry name" value="ZINC_FINGER_C2H2_1"/>
    <property type="match status" value="12"/>
</dbReference>
<dbReference type="PROSITE" id="PS50157">
    <property type="entry name" value="ZINC_FINGER_C2H2_2"/>
    <property type="match status" value="12"/>
</dbReference>
<reference key="1">
    <citation type="journal article" date="1999" name="Cytogenet. Cell Genet.">
        <title>Cloning, characterization, and chromosome assignment of Zfp146 the mouse ortholog of human ZNF146, a gene amplified and overexpressed in pancreatic cancer, and Zfp260 a closely related gene.</title>
        <authorList>
            <person name="Blottiere L."/>
            <person name="Apiou F."/>
            <person name="Ferbus D."/>
            <person name="Guenzi C."/>
            <person name="Dutrillaux B."/>
            <person name="Prosperi M.-T."/>
            <person name="Goubin G."/>
        </authorList>
    </citation>
    <scope>NUCLEOTIDE SEQUENCE [GENOMIC DNA]</scope>
    <scope>TISSUE SPECIFICITY</scope>
    <source>
        <strain>129/Sv</strain>
    </source>
</reference>
<reference key="2">
    <citation type="submission" date="1995-01" db="EMBL/GenBank/DDBJ databases">
        <title>Molecular cloning, brain localization, and ontogeny of a novel murine zinc finger protein gene.</title>
        <authorList>
            <person name="Namikawa K."/>
            <person name="Morita N."/>
            <person name="Suzuki J."/>
            <person name="Kato K."/>
            <person name="Shiosaka S."/>
            <person name="Kiyama H."/>
        </authorList>
    </citation>
    <scope>NUCLEOTIDE SEQUENCE [MRNA]</scope>
    <source>
        <strain>BALB/cJ</strain>
        <tissue>Hippocampus</tissue>
    </source>
</reference>
<reference key="3">
    <citation type="journal article" date="2005" name="Science">
        <title>The transcriptional landscape of the mammalian genome.</title>
        <authorList>
            <person name="Carninci P."/>
            <person name="Kasukawa T."/>
            <person name="Katayama S."/>
            <person name="Gough J."/>
            <person name="Frith M.C."/>
            <person name="Maeda N."/>
            <person name="Oyama R."/>
            <person name="Ravasi T."/>
            <person name="Lenhard B."/>
            <person name="Wells C."/>
            <person name="Kodzius R."/>
            <person name="Shimokawa K."/>
            <person name="Bajic V.B."/>
            <person name="Brenner S.E."/>
            <person name="Batalov S."/>
            <person name="Forrest A.R."/>
            <person name="Zavolan M."/>
            <person name="Davis M.J."/>
            <person name="Wilming L.G."/>
            <person name="Aidinis V."/>
            <person name="Allen J.E."/>
            <person name="Ambesi-Impiombato A."/>
            <person name="Apweiler R."/>
            <person name="Aturaliya R.N."/>
            <person name="Bailey T.L."/>
            <person name="Bansal M."/>
            <person name="Baxter L."/>
            <person name="Beisel K.W."/>
            <person name="Bersano T."/>
            <person name="Bono H."/>
            <person name="Chalk A.M."/>
            <person name="Chiu K.P."/>
            <person name="Choudhary V."/>
            <person name="Christoffels A."/>
            <person name="Clutterbuck D.R."/>
            <person name="Crowe M.L."/>
            <person name="Dalla E."/>
            <person name="Dalrymple B.P."/>
            <person name="de Bono B."/>
            <person name="Della Gatta G."/>
            <person name="di Bernardo D."/>
            <person name="Down T."/>
            <person name="Engstrom P."/>
            <person name="Fagiolini M."/>
            <person name="Faulkner G."/>
            <person name="Fletcher C.F."/>
            <person name="Fukushima T."/>
            <person name="Furuno M."/>
            <person name="Futaki S."/>
            <person name="Gariboldi M."/>
            <person name="Georgii-Hemming P."/>
            <person name="Gingeras T.R."/>
            <person name="Gojobori T."/>
            <person name="Green R.E."/>
            <person name="Gustincich S."/>
            <person name="Harbers M."/>
            <person name="Hayashi Y."/>
            <person name="Hensch T.K."/>
            <person name="Hirokawa N."/>
            <person name="Hill D."/>
            <person name="Huminiecki L."/>
            <person name="Iacono M."/>
            <person name="Ikeo K."/>
            <person name="Iwama A."/>
            <person name="Ishikawa T."/>
            <person name="Jakt M."/>
            <person name="Kanapin A."/>
            <person name="Katoh M."/>
            <person name="Kawasawa Y."/>
            <person name="Kelso J."/>
            <person name="Kitamura H."/>
            <person name="Kitano H."/>
            <person name="Kollias G."/>
            <person name="Krishnan S.P."/>
            <person name="Kruger A."/>
            <person name="Kummerfeld S.K."/>
            <person name="Kurochkin I.V."/>
            <person name="Lareau L.F."/>
            <person name="Lazarevic D."/>
            <person name="Lipovich L."/>
            <person name="Liu J."/>
            <person name="Liuni S."/>
            <person name="McWilliam S."/>
            <person name="Madan Babu M."/>
            <person name="Madera M."/>
            <person name="Marchionni L."/>
            <person name="Matsuda H."/>
            <person name="Matsuzawa S."/>
            <person name="Miki H."/>
            <person name="Mignone F."/>
            <person name="Miyake S."/>
            <person name="Morris K."/>
            <person name="Mottagui-Tabar S."/>
            <person name="Mulder N."/>
            <person name="Nakano N."/>
            <person name="Nakauchi H."/>
            <person name="Ng P."/>
            <person name="Nilsson R."/>
            <person name="Nishiguchi S."/>
            <person name="Nishikawa S."/>
            <person name="Nori F."/>
            <person name="Ohara O."/>
            <person name="Okazaki Y."/>
            <person name="Orlando V."/>
            <person name="Pang K.C."/>
            <person name="Pavan W.J."/>
            <person name="Pavesi G."/>
            <person name="Pesole G."/>
            <person name="Petrovsky N."/>
            <person name="Piazza S."/>
            <person name="Reed J."/>
            <person name="Reid J.F."/>
            <person name="Ring B.Z."/>
            <person name="Ringwald M."/>
            <person name="Rost B."/>
            <person name="Ruan Y."/>
            <person name="Salzberg S.L."/>
            <person name="Sandelin A."/>
            <person name="Schneider C."/>
            <person name="Schoenbach C."/>
            <person name="Sekiguchi K."/>
            <person name="Semple C.A."/>
            <person name="Seno S."/>
            <person name="Sessa L."/>
            <person name="Sheng Y."/>
            <person name="Shibata Y."/>
            <person name="Shimada H."/>
            <person name="Shimada K."/>
            <person name="Silva D."/>
            <person name="Sinclair B."/>
            <person name="Sperling S."/>
            <person name="Stupka E."/>
            <person name="Sugiura K."/>
            <person name="Sultana R."/>
            <person name="Takenaka Y."/>
            <person name="Taki K."/>
            <person name="Tammoja K."/>
            <person name="Tan S.L."/>
            <person name="Tang S."/>
            <person name="Taylor M.S."/>
            <person name="Tegner J."/>
            <person name="Teichmann S.A."/>
            <person name="Ueda H.R."/>
            <person name="van Nimwegen E."/>
            <person name="Verardo R."/>
            <person name="Wei C.L."/>
            <person name="Yagi K."/>
            <person name="Yamanishi H."/>
            <person name="Zabarovsky E."/>
            <person name="Zhu S."/>
            <person name="Zimmer A."/>
            <person name="Hide W."/>
            <person name="Bult C."/>
            <person name="Grimmond S.M."/>
            <person name="Teasdale R.D."/>
            <person name="Liu E.T."/>
            <person name="Brusic V."/>
            <person name="Quackenbush J."/>
            <person name="Wahlestedt C."/>
            <person name="Mattick J.S."/>
            <person name="Hume D.A."/>
            <person name="Kai C."/>
            <person name="Sasaki D."/>
            <person name="Tomaru Y."/>
            <person name="Fukuda S."/>
            <person name="Kanamori-Katayama M."/>
            <person name="Suzuki M."/>
            <person name="Aoki J."/>
            <person name="Arakawa T."/>
            <person name="Iida J."/>
            <person name="Imamura K."/>
            <person name="Itoh M."/>
            <person name="Kato T."/>
            <person name="Kawaji H."/>
            <person name="Kawagashira N."/>
            <person name="Kawashima T."/>
            <person name="Kojima M."/>
            <person name="Kondo S."/>
            <person name="Konno H."/>
            <person name="Nakano K."/>
            <person name="Ninomiya N."/>
            <person name="Nishio T."/>
            <person name="Okada M."/>
            <person name="Plessy C."/>
            <person name="Shibata K."/>
            <person name="Shiraki T."/>
            <person name="Suzuki S."/>
            <person name="Tagami M."/>
            <person name="Waki K."/>
            <person name="Watahiki A."/>
            <person name="Okamura-Oho Y."/>
            <person name="Suzuki H."/>
            <person name="Kawai J."/>
            <person name="Hayashizaki Y."/>
        </authorList>
    </citation>
    <scope>NUCLEOTIDE SEQUENCE [LARGE SCALE MRNA]</scope>
    <source>
        <strain>NOD</strain>
        <tissue>Spleen</tissue>
        <tissue>Thymus</tissue>
    </source>
</reference>
<reference key="4">
    <citation type="journal article" date="2004" name="Genome Res.">
        <title>The status, quality, and expansion of the NIH full-length cDNA project: the Mammalian Gene Collection (MGC).</title>
        <authorList>
            <consortium name="The MGC Project Team"/>
        </authorList>
    </citation>
    <scope>NUCLEOTIDE SEQUENCE [LARGE SCALE MRNA]</scope>
    <source>
        <strain>C57BL/6J</strain>
        <tissue>Eye</tissue>
    </source>
</reference>
<reference key="5">
    <citation type="journal article" date="2005" name="Mol. Cell. Biol.">
        <title>The zinc finger-only protein Zfp260 is a novel cardiac regulator and a nuclear effector of alpha1-adrenergic signaling.</title>
        <authorList>
            <person name="Debrus S."/>
            <person name="Rahbani L."/>
            <person name="Marttila M."/>
            <person name="Delorme B."/>
            <person name="Paradis P."/>
            <person name="Nemer M."/>
        </authorList>
    </citation>
    <scope>TISSUE SPECIFICITY</scope>
    <scope>DEVELOPMENTAL STAGE</scope>
</reference>
<gene>
    <name type="primary">Znf260</name>
    <name type="synonym">Zfp260</name>
</gene>
<organism>
    <name type="scientific">Mus musculus</name>
    <name type="common">Mouse</name>
    <dbReference type="NCBI Taxonomy" id="10090"/>
    <lineage>
        <taxon>Eukaryota</taxon>
        <taxon>Metazoa</taxon>
        <taxon>Chordata</taxon>
        <taxon>Craniata</taxon>
        <taxon>Vertebrata</taxon>
        <taxon>Euteleostomi</taxon>
        <taxon>Mammalia</taxon>
        <taxon>Eutheria</taxon>
        <taxon>Euarchontoglires</taxon>
        <taxon>Glires</taxon>
        <taxon>Rodentia</taxon>
        <taxon>Myomorpha</taxon>
        <taxon>Muroidea</taxon>
        <taxon>Muridae</taxon>
        <taxon>Murinae</taxon>
        <taxon>Mus</taxon>
        <taxon>Mus</taxon>
    </lineage>
</organism>
<name>ZN260_MOUSE</name>
<sequence length="407" mass="46443">MLESLQPESHLLHDEPDPGESVYECNECKETFSLEQNFVEHKKTHSGEKSPECTGCGEESSQASSLTLHLRSRPRRESYKCGECGKAFSQRGNFLSHQKQHTEERPSESKKTPVPMTTTVRNQRNTGNKPYACKECGKAFNGKSYLKEHEKIHTGEKPFECSQCGRAFSQKQYLIKHQNIHSGKKPFKCNECGKAFSQKENLIIHQRIHTGEKPYECKGCGKAFIQKSSLIRHQRSHTGEKPYTCKECGKAFSGKSNLTEHEKIHIGEKPYKCNECGTIFRQKQYLIKHHNIHTGEKPYECNKCGKAFSRITSLIVHVRIHTGDKPYECKICGKAFCQSSSLTVHMRSHTGEKPYGCNECGKAFSQFSTLALHMRIHTGEKPYQCSECGKAFSQKSHHIRHQRIHIH</sequence>
<protein>
    <recommendedName>
        <fullName>Zinc finger protein 260</fullName>
        <shortName>Zfp-260</shortName>
    </recommendedName>
</protein>
<evidence type="ECO:0000250" key="1"/>
<evidence type="ECO:0000255" key="2">
    <source>
        <dbReference type="PROSITE-ProRule" id="PRU00042"/>
    </source>
</evidence>
<evidence type="ECO:0000256" key="3">
    <source>
        <dbReference type="SAM" id="MobiDB-lite"/>
    </source>
</evidence>
<evidence type="ECO:0000269" key="4">
    <source>
    </source>
</evidence>
<evidence type="ECO:0000269" key="5">
    <source>
    </source>
</evidence>
<evidence type="ECO:0000305" key="6"/>
<proteinExistence type="evidence at protein level"/>